<organism>
    <name type="scientific">Bacillus subtilis (strain 168)</name>
    <dbReference type="NCBI Taxonomy" id="224308"/>
    <lineage>
        <taxon>Bacteria</taxon>
        <taxon>Bacillati</taxon>
        <taxon>Bacillota</taxon>
        <taxon>Bacilli</taxon>
        <taxon>Bacillales</taxon>
        <taxon>Bacillaceae</taxon>
        <taxon>Bacillus</taxon>
    </lineage>
</organism>
<evidence type="ECO:0000250" key="1">
    <source>
        <dbReference type="UniProtKB" id="P76318"/>
    </source>
</evidence>
<evidence type="ECO:0000250" key="2">
    <source>
        <dbReference type="UniProtKB" id="Q8R1M0"/>
    </source>
</evidence>
<evidence type="ECO:0000250" key="3">
    <source>
        <dbReference type="UniProtKB" id="Q96FZ2"/>
    </source>
</evidence>
<evidence type="ECO:0000305" key="4"/>
<gene>
    <name type="primary">yobE</name>
    <name type="ordered locus">BSU18880</name>
</gene>
<comment type="function">
    <text evidence="1 2">Sensor of abasic sites in single-stranded DNA (ssDNA) required to preserve genome integrity by promoting error-free repair of abasic sites. Recognizes and binds abasic sites in ssDNA at replication forks and chemically modifies the lesion by forming a covalent cross-link with DNA: forms a stable thiazolidine linkage between a ring-opened abasic site and the alpha-amino and sulfhydryl substituents of its N-terminal catalytic cysteine residue. The DNA-protein cross-link is then reversed: able to catalyze the reversal of the thiazolidine cross-link and cycle between a cross-link and a non-cross-linked state depending on DNA context: mediates self-reversal of the thiazolidine cross-link in double stranded DNA (By similarity). May act as a protease: mediates autocatalytic processing of its N-terminal methionine in order to expose the catalytic cysteine (By similarity).</text>
</comment>
<comment type="activity regulation">
    <text evidence="3">Formation and reversal of DNA-protein cross-link depends on DNA context. Catalyzes formation of the thiazolidine linkage in presence of abasic sites in single-stranded DNA. Mediates the reversal of the thiazolidine cross-link in presence of double stranded DNA.</text>
</comment>
<comment type="domain">
    <text evidence="1 3">The N-terminal catalytic Cys-2 residue forms a thiazolidine linkage to a ring-opened DNA abasic site (By similarity). Glu-106 catalyzes reversal of the thiazolidine linkage; self-reversal is favoured by duplex DNA formation (By similarity). Glu-106 is also involved in sensing abasic sites in single-stranded DNA (ssDNA). His-163 stabilizes the abasic sites by forming a hydrogen bond with the O4' hydroxyl group (By similarity).</text>
</comment>
<comment type="similarity">
    <text evidence="4">Belongs to the SOS response-associated peptidase family.</text>
</comment>
<sequence>MCGKFTLFSEFDDIIEQFNIDQFLPEGEYHPSYNVAPSQNILTIINDGSNNRLGKLRWGLIPPCAKDEKIGYKMINARAETLAEKPSFRKPLGSKRCIIPADSFYEWKRLDPKTKIPMRIKLKSSNLFAFAGLYEKWNTLEGNLLYTCTIITIKPSELMEDIHDRMPVILTDENKKEWLNPKNTDPDYLQSLLLPYDADDMEAYQVSSLVNSPELIESH</sequence>
<protein>
    <recommendedName>
        <fullName evidence="4">Abasic site processing protein YobE</fullName>
        <ecNumber evidence="1">4.-.-.-</ecNumber>
    </recommendedName>
    <alternativeName>
        <fullName>Peptidase YobE</fullName>
        <ecNumber evidence="2">3.4.-.-</ecNumber>
    </alternativeName>
</protein>
<dbReference type="EC" id="4.-.-.-" evidence="1"/>
<dbReference type="EC" id="3.4.-.-" evidence="2"/>
<dbReference type="EMBL" id="AF027868">
    <property type="protein sequence ID" value="AAB84428.1"/>
    <property type="molecule type" value="Genomic_DNA"/>
</dbReference>
<dbReference type="EMBL" id="AL009126">
    <property type="protein sequence ID" value="CAB13780.1"/>
    <property type="molecule type" value="Genomic_DNA"/>
</dbReference>
<dbReference type="PIR" id="E69898">
    <property type="entry name" value="E69898"/>
</dbReference>
<dbReference type="RefSeq" id="NP_389769.1">
    <property type="nucleotide sequence ID" value="NC_000964.3"/>
</dbReference>
<dbReference type="RefSeq" id="WP_004399318.1">
    <property type="nucleotide sequence ID" value="NZ_OZ025638.1"/>
</dbReference>
<dbReference type="SMR" id="O34915"/>
<dbReference type="FunCoup" id="O34915">
    <property type="interactions" value="426"/>
</dbReference>
<dbReference type="PaxDb" id="224308-BSU18880"/>
<dbReference type="EnsemblBacteria" id="CAB13780">
    <property type="protein sequence ID" value="CAB13780"/>
    <property type="gene ID" value="BSU_18880"/>
</dbReference>
<dbReference type="GeneID" id="939611"/>
<dbReference type="KEGG" id="bsu:BSU18880"/>
<dbReference type="PATRIC" id="fig|224308.179.peg.2059"/>
<dbReference type="eggNOG" id="COG2135">
    <property type="taxonomic scope" value="Bacteria"/>
</dbReference>
<dbReference type="InParanoid" id="O34915"/>
<dbReference type="OrthoDB" id="9782620at2"/>
<dbReference type="PhylomeDB" id="O34915"/>
<dbReference type="BioCyc" id="BSUB:BSU18880-MONOMER"/>
<dbReference type="Proteomes" id="UP000001570">
    <property type="component" value="Chromosome"/>
</dbReference>
<dbReference type="GO" id="GO:0016829">
    <property type="term" value="F:lyase activity"/>
    <property type="evidence" value="ECO:0007669"/>
    <property type="project" value="UniProtKB-KW"/>
</dbReference>
<dbReference type="GO" id="GO:0008233">
    <property type="term" value="F:peptidase activity"/>
    <property type="evidence" value="ECO:0007669"/>
    <property type="project" value="UniProtKB-KW"/>
</dbReference>
<dbReference type="GO" id="GO:0003697">
    <property type="term" value="F:single-stranded DNA binding"/>
    <property type="evidence" value="ECO:0007669"/>
    <property type="project" value="InterPro"/>
</dbReference>
<dbReference type="GO" id="GO:0106300">
    <property type="term" value="P:protein-DNA covalent cross-linking repair"/>
    <property type="evidence" value="ECO:0007669"/>
    <property type="project" value="InterPro"/>
</dbReference>
<dbReference type="GO" id="GO:0006508">
    <property type="term" value="P:proteolysis"/>
    <property type="evidence" value="ECO:0007669"/>
    <property type="project" value="UniProtKB-KW"/>
</dbReference>
<dbReference type="GO" id="GO:0009432">
    <property type="term" value="P:SOS response"/>
    <property type="evidence" value="ECO:0007669"/>
    <property type="project" value="UniProtKB-KW"/>
</dbReference>
<dbReference type="Gene3D" id="3.90.1680.10">
    <property type="entry name" value="SOS response associated peptidase-like"/>
    <property type="match status" value="1"/>
</dbReference>
<dbReference type="InterPro" id="IPR003738">
    <property type="entry name" value="SRAP"/>
</dbReference>
<dbReference type="InterPro" id="IPR036590">
    <property type="entry name" value="SRAP-like"/>
</dbReference>
<dbReference type="PANTHER" id="PTHR13604:SF0">
    <property type="entry name" value="ABASIC SITE PROCESSING PROTEIN HMCES"/>
    <property type="match status" value="1"/>
</dbReference>
<dbReference type="PANTHER" id="PTHR13604">
    <property type="entry name" value="DC12-RELATED"/>
    <property type="match status" value="1"/>
</dbReference>
<dbReference type="Pfam" id="PF02586">
    <property type="entry name" value="SRAP"/>
    <property type="match status" value="1"/>
</dbReference>
<dbReference type="SUPFAM" id="SSF143081">
    <property type="entry name" value="BB1717-like"/>
    <property type="match status" value="1"/>
</dbReference>
<keyword id="KW-0190">Covalent protein-DNA linkage</keyword>
<keyword id="KW-0227">DNA damage</keyword>
<keyword id="KW-0238">DNA-binding</keyword>
<keyword id="KW-0378">Hydrolase</keyword>
<keyword id="KW-0456">Lyase</keyword>
<keyword id="KW-0645">Protease</keyword>
<keyword id="KW-1185">Reference proteome</keyword>
<keyword id="KW-0742">SOS response</keyword>
<proteinExistence type="inferred from homology"/>
<accession>O34915</accession>
<accession>Q796E6</accession>
<name>YOBE_BACSU</name>
<reference key="1">
    <citation type="submission" date="1997-11" db="EMBL/GenBank/DDBJ databases">
        <title>Sequence analysis of the Bacillus subtilis chromosome region between the terC and odhAB loci cloned in a yeast artificial chromosome.</title>
        <authorList>
            <person name="Lapidus A."/>
            <person name="Galleron N."/>
            <person name="Sorokin A."/>
            <person name="Ehrlich S.D."/>
        </authorList>
    </citation>
    <scope>NUCLEOTIDE SEQUENCE [GENOMIC DNA]</scope>
</reference>
<reference key="2">
    <citation type="journal article" date="1997" name="Nature">
        <title>The complete genome sequence of the Gram-positive bacterium Bacillus subtilis.</title>
        <authorList>
            <person name="Kunst F."/>
            <person name="Ogasawara N."/>
            <person name="Moszer I."/>
            <person name="Albertini A.M."/>
            <person name="Alloni G."/>
            <person name="Azevedo V."/>
            <person name="Bertero M.G."/>
            <person name="Bessieres P."/>
            <person name="Bolotin A."/>
            <person name="Borchert S."/>
            <person name="Borriss R."/>
            <person name="Boursier L."/>
            <person name="Brans A."/>
            <person name="Braun M."/>
            <person name="Brignell S.C."/>
            <person name="Bron S."/>
            <person name="Brouillet S."/>
            <person name="Bruschi C.V."/>
            <person name="Caldwell B."/>
            <person name="Capuano V."/>
            <person name="Carter N.M."/>
            <person name="Choi S.-K."/>
            <person name="Codani J.-J."/>
            <person name="Connerton I.F."/>
            <person name="Cummings N.J."/>
            <person name="Daniel R.A."/>
            <person name="Denizot F."/>
            <person name="Devine K.M."/>
            <person name="Duesterhoeft A."/>
            <person name="Ehrlich S.D."/>
            <person name="Emmerson P.T."/>
            <person name="Entian K.-D."/>
            <person name="Errington J."/>
            <person name="Fabret C."/>
            <person name="Ferrari E."/>
            <person name="Foulger D."/>
            <person name="Fritz C."/>
            <person name="Fujita M."/>
            <person name="Fujita Y."/>
            <person name="Fuma S."/>
            <person name="Galizzi A."/>
            <person name="Galleron N."/>
            <person name="Ghim S.-Y."/>
            <person name="Glaser P."/>
            <person name="Goffeau A."/>
            <person name="Golightly E.J."/>
            <person name="Grandi G."/>
            <person name="Guiseppi G."/>
            <person name="Guy B.J."/>
            <person name="Haga K."/>
            <person name="Haiech J."/>
            <person name="Harwood C.R."/>
            <person name="Henaut A."/>
            <person name="Hilbert H."/>
            <person name="Holsappel S."/>
            <person name="Hosono S."/>
            <person name="Hullo M.-F."/>
            <person name="Itaya M."/>
            <person name="Jones L.-M."/>
            <person name="Joris B."/>
            <person name="Karamata D."/>
            <person name="Kasahara Y."/>
            <person name="Klaerr-Blanchard M."/>
            <person name="Klein C."/>
            <person name="Kobayashi Y."/>
            <person name="Koetter P."/>
            <person name="Koningstein G."/>
            <person name="Krogh S."/>
            <person name="Kumano M."/>
            <person name="Kurita K."/>
            <person name="Lapidus A."/>
            <person name="Lardinois S."/>
            <person name="Lauber J."/>
            <person name="Lazarevic V."/>
            <person name="Lee S.-M."/>
            <person name="Levine A."/>
            <person name="Liu H."/>
            <person name="Masuda S."/>
            <person name="Mauel C."/>
            <person name="Medigue C."/>
            <person name="Medina N."/>
            <person name="Mellado R.P."/>
            <person name="Mizuno M."/>
            <person name="Moestl D."/>
            <person name="Nakai S."/>
            <person name="Noback M."/>
            <person name="Noone D."/>
            <person name="O'Reilly M."/>
            <person name="Ogawa K."/>
            <person name="Ogiwara A."/>
            <person name="Oudega B."/>
            <person name="Park S.-H."/>
            <person name="Parro V."/>
            <person name="Pohl T.M."/>
            <person name="Portetelle D."/>
            <person name="Porwollik S."/>
            <person name="Prescott A.M."/>
            <person name="Presecan E."/>
            <person name="Pujic P."/>
            <person name="Purnelle B."/>
            <person name="Rapoport G."/>
            <person name="Rey M."/>
            <person name="Reynolds S."/>
            <person name="Rieger M."/>
            <person name="Rivolta C."/>
            <person name="Rocha E."/>
            <person name="Roche B."/>
            <person name="Rose M."/>
            <person name="Sadaie Y."/>
            <person name="Sato T."/>
            <person name="Scanlan E."/>
            <person name="Schleich S."/>
            <person name="Schroeter R."/>
            <person name="Scoffone F."/>
            <person name="Sekiguchi J."/>
            <person name="Sekowska A."/>
            <person name="Seror S.J."/>
            <person name="Serror P."/>
            <person name="Shin B.-S."/>
            <person name="Soldo B."/>
            <person name="Sorokin A."/>
            <person name="Tacconi E."/>
            <person name="Takagi T."/>
            <person name="Takahashi H."/>
            <person name="Takemaru K."/>
            <person name="Takeuchi M."/>
            <person name="Tamakoshi A."/>
            <person name="Tanaka T."/>
            <person name="Terpstra P."/>
            <person name="Tognoni A."/>
            <person name="Tosato V."/>
            <person name="Uchiyama S."/>
            <person name="Vandenbol M."/>
            <person name="Vannier F."/>
            <person name="Vassarotti A."/>
            <person name="Viari A."/>
            <person name="Wambutt R."/>
            <person name="Wedler E."/>
            <person name="Wedler H."/>
            <person name="Weitzenegger T."/>
            <person name="Winters P."/>
            <person name="Wipat A."/>
            <person name="Yamamoto H."/>
            <person name="Yamane K."/>
            <person name="Yasumoto K."/>
            <person name="Yata K."/>
            <person name="Yoshida K."/>
            <person name="Yoshikawa H.-F."/>
            <person name="Zumstein E."/>
            <person name="Yoshikawa H."/>
            <person name="Danchin A."/>
        </authorList>
    </citation>
    <scope>NUCLEOTIDE SEQUENCE [LARGE SCALE GENOMIC DNA]</scope>
    <source>
        <strain>168</strain>
    </source>
</reference>
<feature type="initiator methionine" description="Removed" evidence="2">
    <location>
        <position position="1"/>
    </location>
</feature>
<feature type="chain" id="PRO_0000164402" description="Abasic site processing protein YobE">
    <location>
        <begin position="2"/>
        <end position="219"/>
    </location>
</feature>
<feature type="active site" description="Nucleophile" evidence="3">
    <location>
        <position position="2"/>
    </location>
</feature>
<feature type="active site" evidence="3">
    <location>
        <position position="106"/>
    </location>
</feature>
<feature type="site" description="Required for sensing abasic sites" evidence="1">
    <location>
        <position position="106"/>
    </location>
</feature>
<feature type="site" description="Required to stabilize abasic sites" evidence="1">
    <location>
        <position position="163"/>
    </location>
</feature>
<feature type="modified residue" description="Thiazolidine linkage to a ring-opened DNA abasic site" evidence="1">
    <location>
        <position position="2"/>
    </location>
</feature>